<protein>
    <recommendedName>
        <fullName evidence="1">Nicotinate-nucleotide--dimethylbenzimidazole phosphoribosyltransferase</fullName>
        <shortName evidence="1">NN:DBI PRT</shortName>
        <ecNumber evidence="1">2.4.2.21</ecNumber>
    </recommendedName>
    <alternativeName>
        <fullName evidence="1">N(1)-alpha-phosphoribosyltransferase</fullName>
    </alternativeName>
</protein>
<gene>
    <name evidence="1" type="primary">cobT</name>
    <name type="ordered locus">BBta_3133</name>
</gene>
<organism>
    <name type="scientific">Bradyrhizobium sp. (strain BTAi1 / ATCC BAA-1182)</name>
    <dbReference type="NCBI Taxonomy" id="288000"/>
    <lineage>
        <taxon>Bacteria</taxon>
        <taxon>Pseudomonadati</taxon>
        <taxon>Pseudomonadota</taxon>
        <taxon>Alphaproteobacteria</taxon>
        <taxon>Hyphomicrobiales</taxon>
        <taxon>Nitrobacteraceae</taxon>
        <taxon>Bradyrhizobium</taxon>
    </lineage>
</organism>
<name>COBT_BRASB</name>
<dbReference type="EC" id="2.4.2.21" evidence="1"/>
<dbReference type="EMBL" id="CP000494">
    <property type="protein sequence ID" value="ABQ35248.1"/>
    <property type="molecule type" value="Genomic_DNA"/>
</dbReference>
<dbReference type="RefSeq" id="WP_012043266.1">
    <property type="nucleotide sequence ID" value="NC_009485.1"/>
</dbReference>
<dbReference type="SMR" id="A5EGF4"/>
<dbReference type="STRING" id="288000.BBta_3133"/>
<dbReference type="KEGG" id="bbt:BBta_3133"/>
<dbReference type="eggNOG" id="COG2038">
    <property type="taxonomic scope" value="Bacteria"/>
</dbReference>
<dbReference type="HOGENOM" id="CLU_002982_0_0_5"/>
<dbReference type="OrthoDB" id="9781491at2"/>
<dbReference type="UniPathway" id="UPA00061">
    <property type="reaction ID" value="UER00516"/>
</dbReference>
<dbReference type="Proteomes" id="UP000000246">
    <property type="component" value="Chromosome"/>
</dbReference>
<dbReference type="GO" id="GO:0008939">
    <property type="term" value="F:nicotinate-nucleotide-dimethylbenzimidazole phosphoribosyltransferase activity"/>
    <property type="evidence" value="ECO:0007669"/>
    <property type="project" value="UniProtKB-UniRule"/>
</dbReference>
<dbReference type="GO" id="GO:0009236">
    <property type="term" value="P:cobalamin biosynthetic process"/>
    <property type="evidence" value="ECO:0007669"/>
    <property type="project" value="UniProtKB-KW"/>
</dbReference>
<dbReference type="CDD" id="cd02439">
    <property type="entry name" value="DMB-PRT_CobT"/>
    <property type="match status" value="1"/>
</dbReference>
<dbReference type="FunFam" id="3.40.50.10210:FF:000001">
    <property type="entry name" value="Nicotinate-nucleotide--dimethylbenzimidazole phosphoribosyltransferase"/>
    <property type="match status" value="1"/>
</dbReference>
<dbReference type="Gene3D" id="1.10.1610.10">
    <property type="match status" value="1"/>
</dbReference>
<dbReference type="Gene3D" id="3.40.50.10210">
    <property type="match status" value="1"/>
</dbReference>
<dbReference type="HAMAP" id="MF_00230">
    <property type="entry name" value="CobT"/>
    <property type="match status" value="1"/>
</dbReference>
<dbReference type="InterPro" id="IPR003200">
    <property type="entry name" value="Nict_dMeBzImd_PRibTrfase"/>
</dbReference>
<dbReference type="InterPro" id="IPR017846">
    <property type="entry name" value="Nict_dMeBzImd_PRibTrfase_bact"/>
</dbReference>
<dbReference type="InterPro" id="IPR023195">
    <property type="entry name" value="Nict_dMeBzImd_PRibTrfase_N"/>
</dbReference>
<dbReference type="InterPro" id="IPR036087">
    <property type="entry name" value="Nict_dMeBzImd_PRibTrfase_sf"/>
</dbReference>
<dbReference type="NCBIfam" id="TIGR03160">
    <property type="entry name" value="cobT_DBIPRT"/>
    <property type="match status" value="1"/>
</dbReference>
<dbReference type="NCBIfam" id="NF000996">
    <property type="entry name" value="PRK00105.1"/>
    <property type="match status" value="1"/>
</dbReference>
<dbReference type="PANTHER" id="PTHR43463">
    <property type="entry name" value="NICOTINATE-NUCLEOTIDE--DIMETHYLBENZIMIDAZOLE PHOSPHORIBOSYLTRANSFERASE"/>
    <property type="match status" value="1"/>
</dbReference>
<dbReference type="PANTHER" id="PTHR43463:SF1">
    <property type="entry name" value="NICOTINATE-NUCLEOTIDE--DIMETHYLBENZIMIDAZOLE PHOSPHORIBOSYLTRANSFERASE"/>
    <property type="match status" value="1"/>
</dbReference>
<dbReference type="Pfam" id="PF02277">
    <property type="entry name" value="DBI_PRT"/>
    <property type="match status" value="1"/>
</dbReference>
<dbReference type="SUPFAM" id="SSF52733">
    <property type="entry name" value="Nicotinate mononucleotide:5,6-dimethylbenzimidazole phosphoribosyltransferase (CobT)"/>
    <property type="match status" value="1"/>
</dbReference>
<comment type="function">
    <text evidence="1">Catalyzes the synthesis of alpha-ribazole-5'-phosphate from nicotinate mononucleotide (NAMN) and 5,6-dimethylbenzimidazole (DMB).</text>
</comment>
<comment type="catalytic activity">
    <reaction evidence="1">
        <text>5,6-dimethylbenzimidazole + nicotinate beta-D-ribonucleotide = alpha-ribazole 5'-phosphate + nicotinate + H(+)</text>
        <dbReference type="Rhea" id="RHEA:11196"/>
        <dbReference type="ChEBI" id="CHEBI:15378"/>
        <dbReference type="ChEBI" id="CHEBI:15890"/>
        <dbReference type="ChEBI" id="CHEBI:32544"/>
        <dbReference type="ChEBI" id="CHEBI:57502"/>
        <dbReference type="ChEBI" id="CHEBI:57918"/>
        <dbReference type="EC" id="2.4.2.21"/>
    </reaction>
</comment>
<comment type="pathway">
    <text evidence="1">Nucleoside biosynthesis; alpha-ribazole biosynthesis; alpha-ribazole from 5,6-dimethylbenzimidazole: step 1/2.</text>
</comment>
<comment type="similarity">
    <text evidence="1">Belongs to the CobT family.</text>
</comment>
<feature type="chain" id="PRO_1000021578" description="Nicotinate-nucleotide--dimethylbenzimidazole phosphoribosyltransferase">
    <location>
        <begin position="1"/>
        <end position="351"/>
    </location>
</feature>
<feature type="active site" description="Proton acceptor" evidence="1">
    <location>
        <position position="317"/>
    </location>
</feature>
<proteinExistence type="inferred from homology"/>
<accession>A5EGF4</accession>
<sequence length="351" mass="35842">MLPDWISLDCAAPSESHRQAAMARQAQLTKPLGALGRLEEVAVELAALQATDHPGADRAPVVLFAGDHGIAAQGVSAYPPEVTVQMLRNFAGGGAAIAVLARHLNCPLEVVDVGTLASDAVPGVVADKTRRGTRDFSVAQALTPEEVAFACDAGRRALARQADHQPQLVIFGEMGIGNTTSAAAIAAALLSCAPVDIVGSGTGLDADGRAKKAAVIVAALARHGLTSDAAVADILAAVGGFEIIAMAGAMIAAAQRRWPVLVDGFIVSVAALAAVRLNPSCRTWLLFSHRSAERGHALVLDALGAHPLIDLDLRLGEASGAATALPIIRLACALHNGMATFAEAAVSGRDA</sequence>
<keyword id="KW-0169">Cobalamin biosynthesis</keyword>
<keyword id="KW-0328">Glycosyltransferase</keyword>
<keyword id="KW-1185">Reference proteome</keyword>
<keyword id="KW-0808">Transferase</keyword>
<reference key="1">
    <citation type="journal article" date="2007" name="Science">
        <title>Legumes symbioses: absence of nod genes in photosynthetic bradyrhizobia.</title>
        <authorList>
            <person name="Giraud E."/>
            <person name="Moulin L."/>
            <person name="Vallenet D."/>
            <person name="Barbe V."/>
            <person name="Cytryn E."/>
            <person name="Avarre J.-C."/>
            <person name="Jaubert M."/>
            <person name="Simon D."/>
            <person name="Cartieaux F."/>
            <person name="Prin Y."/>
            <person name="Bena G."/>
            <person name="Hannibal L."/>
            <person name="Fardoux J."/>
            <person name="Kojadinovic M."/>
            <person name="Vuillet L."/>
            <person name="Lajus A."/>
            <person name="Cruveiller S."/>
            <person name="Rouy Z."/>
            <person name="Mangenot S."/>
            <person name="Segurens B."/>
            <person name="Dossat C."/>
            <person name="Franck W.L."/>
            <person name="Chang W.-S."/>
            <person name="Saunders E."/>
            <person name="Bruce D."/>
            <person name="Richardson P."/>
            <person name="Normand P."/>
            <person name="Dreyfus B."/>
            <person name="Pignol D."/>
            <person name="Stacey G."/>
            <person name="Emerich D."/>
            <person name="Vermeglio A."/>
            <person name="Medigue C."/>
            <person name="Sadowsky M."/>
        </authorList>
    </citation>
    <scope>NUCLEOTIDE SEQUENCE [LARGE SCALE GENOMIC DNA]</scope>
    <source>
        <strain>BTAi1 / ATCC BAA-1182</strain>
    </source>
</reference>
<evidence type="ECO:0000255" key="1">
    <source>
        <dbReference type="HAMAP-Rule" id="MF_00230"/>
    </source>
</evidence>